<keyword id="KW-0536">Nodulation</keyword>
<keyword id="KW-0614">Plasmid</keyword>
<keyword id="KW-0808">Transferase</keyword>
<feature type="chain" id="PRO_0000096926" description="Nodulation protein H">
    <location>
        <begin position="1"/>
        <end position="247"/>
    </location>
</feature>
<feature type="region of interest" description="Hydrophobic">
    <location>
        <begin position="1"/>
        <end position="16"/>
    </location>
</feature>
<gene>
    <name type="primary">nodH</name>
    <name type="synonym">hsnD</name>
</gene>
<sequence length="247" mass="28652">MTHSTLPPRPFAILAMRRTGTHYLEELVNEHPNVLSNGELLNTYDTNWPDKERLLLSDRELLERACWRYPPHSDKKVTHVGCKINEPQFQERPSFFAELTAWPGLKVILVIRRNTLESLRSFVQARQTRQWLQFKSDSSAPPPPVMLPFATCEAYFKAADDFHARVVNAFDSSRIRLIEYERLLRDPVPCVATVLDFLGAPALQLADRGILRRQETRPLDQTVRNFHELRVHFANGPYARFFELAND</sequence>
<dbReference type="EC" id="2.8.2.-"/>
<dbReference type="EMBL" id="M14052">
    <property type="protein sequence ID" value="AAA26291.1"/>
    <property type="molecule type" value="Genomic_DNA"/>
</dbReference>
<dbReference type="GO" id="GO:0016740">
    <property type="term" value="F:transferase activity"/>
    <property type="evidence" value="ECO:0007669"/>
    <property type="project" value="UniProtKB-KW"/>
</dbReference>
<dbReference type="Gene3D" id="3.40.50.300">
    <property type="entry name" value="P-loop containing nucleotide triphosphate hydrolases"/>
    <property type="match status" value="1"/>
</dbReference>
<dbReference type="InterPro" id="IPR052796">
    <property type="entry name" value="Nod_factor_sulfotransferase"/>
</dbReference>
<dbReference type="InterPro" id="IPR027417">
    <property type="entry name" value="P-loop_NTPase"/>
</dbReference>
<dbReference type="PANTHER" id="PTHR32175">
    <property type="entry name" value="PROTEIN, PUTATIVE, EXPRESSED-RELATED"/>
    <property type="match status" value="1"/>
</dbReference>
<dbReference type="PANTHER" id="PTHR32175:SF26">
    <property type="entry name" value="PROTEIN, PUTATIVE, EXPRESSED-RELATED"/>
    <property type="match status" value="1"/>
</dbReference>
<dbReference type="Pfam" id="PF13469">
    <property type="entry name" value="Sulfotransfer_3"/>
    <property type="match status" value="1"/>
</dbReference>
<dbReference type="SUPFAM" id="SSF52540">
    <property type="entry name" value="P-loop containing nucleoside triphosphate hydrolases"/>
    <property type="match status" value="1"/>
</dbReference>
<proteinExistence type="predicted"/>
<geneLocation type="plasmid">
    <name>sym pRme41b</name>
</geneLocation>
<comment type="function">
    <text>Required for the formation of sulfated nod factor. Proposed to transfer activated sulfate (PAPS) to a N-acetylglucosamine of the nod factor.</text>
</comment>
<accession>P06237</accession>
<protein>
    <recommendedName>
        <fullName>Nodulation protein H</fullName>
        <ecNumber>2.8.2.-</ecNumber>
    </recommendedName>
    <alternativeName>
        <fullName>Host-specificity of nodulation protein D</fullName>
    </alternativeName>
</protein>
<organism>
    <name type="scientific">Rhizobium meliloti</name>
    <name type="common">Ensifer meliloti</name>
    <name type="synonym">Sinorhizobium meliloti</name>
    <dbReference type="NCBI Taxonomy" id="382"/>
    <lineage>
        <taxon>Bacteria</taxon>
        <taxon>Pseudomonadati</taxon>
        <taxon>Pseudomonadota</taxon>
        <taxon>Alphaproteobacteria</taxon>
        <taxon>Hyphomicrobiales</taxon>
        <taxon>Rhizobiaceae</taxon>
        <taxon>Sinorhizobium/Ensifer group</taxon>
        <taxon>Sinorhizobium</taxon>
    </lineage>
</organism>
<name>NOH4_RHIML</name>
<reference key="1">
    <citation type="journal article" date="1986" name="Cell">
        <title>Organization, structure and symbiotic function of Rhizobium meliloti nodulation genes determining host specificity for alfalfa.</title>
        <authorList>
            <person name="Horvath B."/>
            <person name="Kondorosi E."/>
            <person name="John M."/>
            <person name="Schmidt J."/>
            <person name="Toeroek I."/>
            <person name="Gyoergypal Z."/>
            <person name="Barabas I."/>
            <person name="Wieneke U."/>
            <person name="Schell J."/>
            <person name="Kondorosi A."/>
        </authorList>
    </citation>
    <scope>NUCLEOTIDE SEQUENCE [GENOMIC DNA]</scope>
</reference>